<name>SC29_CENLI</name>
<protein>
    <recommendedName>
        <fullName>Toxin II.9</fullName>
    </recommendedName>
</protein>
<accession>P60264</accession>
<accession>Q7M4H4</accession>
<evidence type="ECO:0000250" key="1"/>
<evidence type="ECO:0000255" key="2">
    <source>
        <dbReference type="PROSITE-ProRule" id="PRU01210"/>
    </source>
</evidence>
<evidence type="ECO:0000305" key="3"/>
<reference key="1">
    <citation type="journal article" date="1988" name="Comp. Biochem. Physiol.">
        <title>Isolation and characterization of two toxins from the Mexican scorpion Centruroides limpidus limpidus Karsch.</title>
        <authorList>
            <person name="Alagon A.C."/>
            <person name="Guzman H.S."/>
            <person name="Martin B.M."/>
            <person name="Ramirez A.N."/>
            <person name="Carbone E."/>
            <person name="Possani L.D."/>
        </authorList>
    </citation>
    <scope>PROTEIN SEQUENCE</scope>
    <source>
        <tissue>Venom</tissue>
    </source>
</reference>
<sequence length="29" mass="3416">KKDGYLVNKYTGCKVNCYKLGENKFCNRE</sequence>
<comment type="function">
    <text evidence="1">Binds to sodium channels (Nav) and shift the voltage of activation toward more negative potentials (By similarity). This toxin is active on crustaceans.</text>
</comment>
<comment type="subcellular location">
    <subcellularLocation>
        <location>Secreted</location>
    </subcellularLocation>
</comment>
<comment type="tissue specificity">
    <text>Expressed by the venom gland.</text>
</comment>
<comment type="domain">
    <text evidence="3">Has the structural arrangement of an alpha-helix connected to antiparallel beta-sheets by disulfide bonds (CS-alpha/beta).</text>
</comment>
<comment type="similarity">
    <text evidence="3">Belongs to the long (4 C-C) scorpion toxin superfamily. Sodium channel inhibitor family. Beta subfamily.</text>
</comment>
<feature type="chain" id="PRO_0000066764" description="Toxin II.9">
    <location>
        <begin position="1"/>
        <end position="29" status="greater than"/>
    </location>
</feature>
<feature type="domain" description="LCN-type CS-alpha/beta" evidence="2">
    <location>
        <begin position="2"/>
        <end position="29" status="greater than"/>
    </location>
</feature>
<feature type="non-terminal residue">
    <location>
        <position position="29"/>
    </location>
</feature>
<organism>
    <name type="scientific">Centruroides limpidus</name>
    <name type="common">Mexican scorpion</name>
    <dbReference type="NCBI Taxonomy" id="6876"/>
    <lineage>
        <taxon>Eukaryota</taxon>
        <taxon>Metazoa</taxon>
        <taxon>Ecdysozoa</taxon>
        <taxon>Arthropoda</taxon>
        <taxon>Chelicerata</taxon>
        <taxon>Arachnida</taxon>
        <taxon>Scorpiones</taxon>
        <taxon>Buthida</taxon>
        <taxon>Buthoidea</taxon>
        <taxon>Buthidae</taxon>
        <taxon>Centruroides</taxon>
    </lineage>
</organism>
<dbReference type="PIR" id="A60791">
    <property type="entry name" value="A60791"/>
</dbReference>
<dbReference type="SMR" id="P60264"/>
<dbReference type="GO" id="GO:0005576">
    <property type="term" value="C:extracellular region"/>
    <property type="evidence" value="ECO:0007669"/>
    <property type="project" value="UniProtKB-SubCell"/>
</dbReference>
<dbReference type="GO" id="GO:0008200">
    <property type="term" value="F:ion channel inhibitor activity"/>
    <property type="evidence" value="ECO:0007669"/>
    <property type="project" value="InterPro"/>
</dbReference>
<dbReference type="GO" id="GO:0017080">
    <property type="term" value="F:sodium channel regulator activity"/>
    <property type="evidence" value="ECO:0007669"/>
    <property type="project" value="UniProtKB-KW"/>
</dbReference>
<dbReference type="GO" id="GO:0090729">
    <property type="term" value="F:toxin activity"/>
    <property type="evidence" value="ECO:0007669"/>
    <property type="project" value="UniProtKB-KW"/>
</dbReference>
<dbReference type="Gene3D" id="3.30.30.10">
    <property type="entry name" value="Knottin, scorpion toxin-like"/>
    <property type="match status" value="1"/>
</dbReference>
<dbReference type="InterPro" id="IPR044062">
    <property type="entry name" value="LCN-type_CS_alpha_beta_dom"/>
</dbReference>
<dbReference type="InterPro" id="IPR036574">
    <property type="entry name" value="Scorpion_toxin-like_sf"/>
</dbReference>
<dbReference type="SUPFAM" id="SSF57095">
    <property type="entry name" value="Scorpion toxin-like"/>
    <property type="match status" value="1"/>
</dbReference>
<dbReference type="PROSITE" id="PS51863">
    <property type="entry name" value="LCN_CSAB"/>
    <property type="match status" value="1"/>
</dbReference>
<proteinExistence type="evidence at protein level"/>
<keyword id="KW-0903">Direct protein sequencing</keyword>
<keyword id="KW-0872">Ion channel impairing toxin</keyword>
<keyword id="KW-0528">Neurotoxin</keyword>
<keyword id="KW-0964">Secreted</keyword>
<keyword id="KW-0800">Toxin</keyword>
<keyword id="KW-0738">Voltage-gated sodium channel impairing toxin</keyword>